<reference key="1">
    <citation type="journal article" date="1996" name="Microbiology">
        <title>Sequence analysis of the Bacillus subtilis chromosome region between the serA and kdg loci cloned in a yeast artificial chromosome.</title>
        <authorList>
            <person name="Sorokin A.V."/>
            <person name="Azevedo V."/>
            <person name="Zumstein E."/>
            <person name="Galleron N."/>
            <person name="Ehrlich S.D."/>
            <person name="Serror P."/>
        </authorList>
    </citation>
    <scope>NUCLEOTIDE SEQUENCE [GENOMIC DNA]</scope>
    <source>
        <strain>168 / Marburg / ATCC 6051 / DSM 10 / JCM 1465 / NBRC 13719 / NCIMB 3610 / NRRL NRS-744 / VKM B-501</strain>
    </source>
</reference>
<reference key="2">
    <citation type="journal article" date="1997" name="Nature">
        <title>The complete genome sequence of the Gram-positive bacterium Bacillus subtilis.</title>
        <authorList>
            <person name="Kunst F."/>
            <person name="Ogasawara N."/>
            <person name="Moszer I."/>
            <person name="Albertini A.M."/>
            <person name="Alloni G."/>
            <person name="Azevedo V."/>
            <person name="Bertero M.G."/>
            <person name="Bessieres P."/>
            <person name="Bolotin A."/>
            <person name="Borchert S."/>
            <person name="Borriss R."/>
            <person name="Boursier L."/>
            <person name="Brans A."/>
            <person name="Braun M."/>
            <person name="Brignell S.C."/>
            <person name="Bron S."/>
            <person name="Brouillet S."/>
            <person name="Bruschi C.V."/>
            <person name="Caldwell B."/>
            <person name="Capuano V."/>
            <person name="Carter N.M."/>
            <person name="Choi S.-K."/>
            <person name="Codani J.-J."/>
            <person name="Connerton I.F."/>
            <person name="Cummings N.J."/>
            <person name="Daniel R.A."/>
            <person name="Denizot F."/>
            <person name="Devine K.M."/>
            <person name="Duesterhoeft A."/>
            <person name="Ehrlich S.D."/>
            <person name="Emmerson P.T."/>
            <person name="Entian K.-D."/>
            <person name="Errington J."/>
            <person name="Fabret C."/>
            <person name="Ferrari E."/>
            <person name="Foulger D."/>
            <person name="Fritz C."/>
            <person name="Fujita M."/>
            <person name="Fujita Y."/>
            <person name="Fuma S."/>
            <person name="Galizzi A."/>
            <person name="Galleron N."/>
            <person name="Ghim S.-Y."/>
            <person name="Glaser P."/>
            <person name="Goffeau A."/>
            <person name="Golightly E.J."/>
            <person name="Grandi G."/>
            <person name="Guiseppi G."/>
            <person name="Guy B.J."/>
            <person name="Haga K."/>
            <person name="Haiech J."/>
            <person name="Harwood C.R."/>
            <person name="Henaut A."/>
            <person name="Hilbert H."/>
            <person name="Holsappel S."/>
            <person name="Hosono S."/>
            <person name="Hullo M.-F."/>
            <person name="Itaya M."/>
            <person name="Jones L.-M."/>
            <person name="Joris B."/>
            <person name="Karamata D."/>
            <person name="Kasahara Y."/>
            <person name="Klaerr-Blanchard M."/>
            <person name="Klein C."/>
            <person name="Kobayashi Y."/>
            <person name="Koetter P."/>
            <person name="Koningstein G."/>
            <person name="Krogh S."/>
            <person name="Kumano M."/>
            <person name="Kurita K."/>
            <person name="Lapidus A."/>
            <person name="Lardinois S."/>
            <person name="Lauber J."/>
            <person name="Lazarevic V."/>
            <person name="Lee S.-M."/>
            <person name="Levine A."/>
            <person name="Liu H."/>
            <person name="Masuda S."/>
            <person name="Mauel C."/>
            <person name="Medigue C."/>
            <person name="Medina N."/>
            <person name="Mellado R.P."/>
            <person name="Mizuno M."/>
            <person name="Moestl D."/>
            <person name="Nakai S."/>
            <person name="Noback M."/>
            <person name="Noone D."/>
            <person name="O'Reilly M."/>
            <person name="Ogawa K."/>
            <person name="Ogiwara A."/>
            <person name="Oudega B."/>
            <person name="Park S.-H."/>
            <person name="Parro V."/>
            <person name="Pohl T.M."/>
            <person name="Portetelle D."/>
            <person name="Porwollik S."/>
            <person name="Prescott A.M."/>
            <person name="Presecan E."/>
            <person name="Pujic P."/>
            <person name="Purnelle B."/>
            <person name="Rapoport G."/>
            <person name="Rey M."/>
            <person name="Reynolds S."/>
            <person name="Rieger M."/>
            <person name="Rivolta C."/>
            <person name="Rocha E."/>
            <person name="Roche B."/>
            <person name="Rose M."/>
            <person name="Sadaie Y."/>
            <person name="Sato T."/>
            <person name="Scanlan E."/>
            <person name="Schleich S."/>
            <person name="Schroeter R."/>
            <person name="Scoffone F."/>
            <person name="Sekiguchi J."/>
            <person name="Sekowska A."/>
            <person name="Seror S.J."/>
            <person name="Serror P."/>
            <person name="Shin B.-S."/>
            <person name="Soldo B."/>
            <person name="Sorokin A."/>
            <person name="Tacconi E."/>
            <person name="Takagi T."/>
            <person name="Takahashi H."/>
            <person name="Takemaru K."/>
            <person name="Takeuchi M."/>
            <person name="Tamakoshi A."/>
            <person name="Tanaka T."/>
            <person name="Terpstra P."/>
            <person name="Tognoni A."/>
            <person name="Tosato V."/>
            <person name="Uchiyama S."/>
            <person name="Vandenbol M."/>
            <person name="Vannier F."/>
            <person name="Vassarotti A."/>
            <person name="Viari A."/>
            <person name="Wambutt R."/>
            <person name="Wedler E."/>
            <person name="Wedler H."/>
            <person name="Weitzenegger T."/>
            <person name="Winters P."/>
            <person name="Wipat A."/>
            <person name="Yamamoto H."/>
            <person name="Yamane K."/>
            <person name="Yasumoto K."/>
            <person name="Yata K."/>
            <person name="Yoshida K."/>
            <person name="Yoshikawa H.-F."/>
            <person name="Zumstein E."/>
            <person name="Yoshikawa H."/>
            <person name="Danchin A."/>
        </authorList>
    </citation>
    <scope>NUCLEOTIDE SEQUENCE [LARGE SCALE GENOMIC DNA]</scope>
    <source>
        <strain>168</strain>
    </source>
</reference>
<sequence length="179" mass="21364">MQTPVSVNEKKDFIRWFLNHYQLKRRECVWILNYLMSHDSLMEKVHFVEQAEFCPRGIIMSTHCVEEVPFRFYKENVMTTDAEKSFHDIRLNKQQDLFIQLNFRSAYSSPEYAAVLESNPHIPKNLFENKKDQGLAEQILEHAISTFQREKLLKDIDDALDRHDKEAFEQLSRQLNQLT</sequence>
<organism>
    <name type="scientific">Bacillus subtilis (strain 168)</name>
    <dbReference type="NCBI Taxonomy" id="224308"/>
    <lineage>
        <taxon>Bacteria</taxon>
        <taxon>Bacillati</taxon>
        <taxon>Bacillota</taxon>
        <taxon>Bacilli</taxon>
        <taxon>Bacillales</taxon>
        <taxon>Bacillaceae</taxon>
        <taxon>Bacillus</taxon>
    </lineage>
</organism>
<evidence type="ECO:0000255" key="1">
    <source>
        <dbReference type="HAMAP-Rule" id="MF_00760"/>
    </source>
</evidence>
<dbReference type="EMBL" id="L47709">
    <property type="protein sequence ID" value="AAB38433.1"/>
    <property type="molecule type" value="Genomic_DNA"/>
</dbReference>
<dbReference type="EMBL" id="AL009126">
    <property type="protein sequence ID" value="CAB14174.1"/>
    <property type="molecule type" value="Genomic_DNA"/>
</dbReference>
<dbReference type="PIR" id="F69936">
    <property type="entry name" value="F69936"/>
</dbReference>
<dbReference type="RefSeq" id="NP_390139.1">
    <property type="nucleotide sequence ID" value="NC_000964.3"/>
</dbReference>
<dbReference type="RefSeq" id="WP_004399171.1">
    <property type="nucleotide sequence ID" value="NZ_OZ025638.1"/>
</dbReference>
<dbReference type="SMR" id="P54390"/>
<dbReference type="FunCoup" id="P54390">
    <property type="interactions" value="78"/>
</dbReference>
<dbReference type="STRING" id="224308.BSU22580"/>
<dbReference type="jPOST" id="P54390"/>
<dbReference type="PaxDb" id="224308-BSU22580"/>
<dbReference type="EnsemblBacteria" id="CAB14174">
    <property type="protein sequence ID" value="CAB14174"/>
    <property type="gene ID" value="BSU_22580"/>
</dbReference>
<dbReference type="GeneID" id="939016"/>
<dbReference type="KEGG" id="bsu:BSU22580"/>
<dbReference type="PATRIC" id="fig|224308.179.peg.2462"/>
<dbReference type="eggNOG" id="COG5582">
    <property type="taxonomic scope" value="Bacteria"/>
</dbReference>
<dbReference type="InParanoid" id="P54390"/>
<dbReference type="OrthoDB" id="2155814at2"/>
<dbReference type="PhylomeDB" id="P54390"/>
<dbReference type="BioCyc" id="BSUB:BSU22580-MONOMER"/>
<dbReference type="Proteomes" id="UP000001570">
    <property type="component" value="Chromosome"/>
</dbReference>
<dbReference type="Gene3D" id="3.40.1530.30">
    <property type="entry name" value="Uncharacterised family UPF0302, N-terminal domain"/>
    <property type="match status" value="1"/>
</dbReference>
<dbReference type="Gene3D" id="4.10.810.10">
    <property type="entry name" value="Virus Scaffolding Protein, Chain A"/>
    <property type="match status" value="1"/>
</dbReference>
<dbReference type="HAMAP" id="MF_00760">
    <property type="entry name" value="UPF0302"/>
    <property type="match status" value="1"/>
</dbReference>
<dbReference type="InterPro" id="IPR014957">
    <property type="entry name" value="IDEAL_dom"/>
</dbReference>
<dbReference type="InterPro" id="IPR011188">
    <property type="entry name" value="UPF0302"/>
</dbReference>
<dbReference type="InterPro" id="IPR014963">
    <property type="entry name" value="UPF0302_N"/>
</dbReference>
<dbReference type="InterPro" id="IPR038091">
    <property type="entry name" value="UPF0302_N_sf"/>
</dbReference>
<dbReference type="InterPro" id="IPR027393">
    <property type="entry name" value="Virus_scaffolding_prot_C"/>
</dbReference>
<dbReference type="NCBIfam" id="NF002965">
    <property type="entry name" value="PRK03636.1"/>
    <property type="match status" value="1"/>
</dbReference>
<dbReference type="Pfam" id="PF08858">
    <property type="entry name" value="IDEAL"/>
    <property type="match status" value="1"/>
</dbReference>
<dbReference type="Pfam" id="PF08864">
    <property type="entry name" value="UPF0302"/>
    <property type="match status" value="1"/>
</dbReference>
<dbReference type="PIRSF" id="PIRSF007165">
    <property type="entry name" value="UCP007165"/>
    <property type="match status" value="1"/>
</dbReference>
<dbReference type="SMART" id="SM00914">
    <property type="entry name" value="IDEAL"/>
    <property type="match status" value="1"/>
</dbReference>
<name>YPIB_BACSU</name>
<proteinExistence type="inferred from homology"/>
<comment type="similarity">
    <text evidence="1">Belongs to the UPF0302 family.</text>
</comment>
<keyword id="KW-1185">Reference proteome</keyword>
<protein>
    <recommendedName>
        <fullName evidence="1">UPF0302 protein YpiB</fullName>
    </recommendedName>
</protein>
<gene>
    <name type="primary">ypiB</name>
    <name type="ordered locus">BSU22580</name>
</gene>
<feature type="chain" id="PRO_0000216098" description="UPF0302 protein YpiB">
    <location>
        <begin position="1"/>
        <end position="179"/>
    </location>
</feature>
<accession>P54390</accession>